<comment type="function">
    <text evidence="6 7 8">Intramembrane-cleaving aspartic protease (I-CLiP) that cleaves type II membrane protein substrates in or close to their luminal transmembrane domain boundaries. Acts like a sheddase by mediating the proteolytic release and secretion of active site-containing ectodomains of glycan-modifiying glycosidase and glycosyltransferase enzymes such as MGAT5, B4GAT1 and B4GALT1 (PubMed:25354954, PubMed:25827571). Plays a role in the regulation of cellular glycosylation processes (PubMed:25354954). Required to link T-cell antigen receptor (TCR) and calcineurin-NFAT signaling cascades in lymphocytes by promoting the association of STIM1 and ORAI1 during store-operated calcium entry (SOCE) in a protease-independent manner (PubMed:25384971).</text>
</comment>
<comment type="activity regulation">
    <text evidence="3">Its proteolytic activity is blocked by a signal peptide peptidase (SPP) inhibitor, (ZLL)2-ketone (ZLL) or a gamma-secretase inhibitor, LY411,575.</text>
</comment>
<comment type="subunit">
    <text evidence="3 7">Monomer. Homodimer (By similarity). Interacts with STIM1 (via transmembrane region and SOAR/CAD domain); the interaction promotes the binding of STIM1 to ORAI1 (PubMed:25384971).</text>
</comment>
<comment type="subcellular location">
    <subcellularLocation>
        <location evidence="3">Endoplasmic reticulum membrane</location>
        <topology evidence="3">Multi-pass membrane protein</topology>
    </subcellularLocation>
    <subcellularLocation>
        <location evidence="3">Golgi apparatus</location>
    </subcellularLocation>
    <subcellularLocation>
        <location evidence="3">Membrane</location>
        <topology evidence="3">Multi-pass membrane protein</topology>
        <orientation evidence="3">Lumenal side</orientation>
    </subcellularLocation>
</comment>
<comment type="domain">
    <text evidence="1 3">The first transmembrane domain may act as a type I signal anchor. The catalytic loops is exposed toward the lumen. The PAL motif is required for normal active site conformation. The catalytic domains embedded in the membrane are in the opposite orientation to that of the presenilin protein family.</text>
</comment>
<comment type="PTM">
    <text evidence="3">Not glycosylated.</text>
</comment>
<comment type="disruption phenotype">
    <text evidence="5 6">Mice are viable but display growth retardation and haematologic abnormalities (PubMed:20562862). Male are sterile (PubMed:20562862). Exhibit hyperglycosylation of cellular glycoproteins (PubMed:25354954).</text>
</comment>
<comment type="similarity">
    <text evidence="9">Belongs to the peptidase A22B family.</text>
</comment>
<comment type="sequence caution" evidence="9">
    <conflict type="erroneous initiation">
        <sequence resource="EMBL-CDS" id="BAB29515"/>
    </conflict>
    <text>Extended N-terminus.</text>
</comment>
<reference key="1">
    <citation type="journal article" date="2005" name="Science">
        <title>The transcriptional landscape of the mammalian genome.</title>
        <authorList>
            <person name="Carninci P."/>
            <person name="Kasukawa T."/>
            <person name="Katayama S."/>
            <person name="Gough J."/>
            <person name="Frith M.C."/>
            <person name="Maeda N."/>
            <person name="Oyama R."/>
            <person name="Ravasi T."/>
            <person name="Lenhard B."/>
            <person name="Wells C."/>
            <person name="Kodzius R."/>
            <person name="Shimokawa K."/>
            <person name="Bajic V.B."/>
            <person name="Brenner S.E."/>
            <person name="Batalov S."/>
            <person name="Forrest A.R."/>
            <person name="Zavolan M."/>
            <person name="Davis M.J."/>
            <person name="Wilming L.G."/>
            <person name="Aidinis V."/>
            <person name="Allen J.E."/>
            <person name="Ambesi-Impiombato A."/>
            <person name="Apweiler R."/>
            <person name="Aturaliya R.N."/>
            <person name="Bailey T.L."/>
            <person name="Bansal M."/>
            <person name="Baxter L."/>
            <person name="Beisel K.W."/>
            <person name="Bersano T."/>
            <person name="Bono H."/>
            <person name="Chalk A.M."/>
            <person name="Chiu K.P."/>
            <person name="Choudhary V."/>
            <person name="Christoffels A."/>
            <person name="Clutterbuck D.R."/>
            <person name="Crowe M.L."/>
            <person name="Dalla E."/>
            <person name="Dalrymple B.P."/>
            <person name="de Bono B."/>
            <person name="Della Gatta G."/>
            <person name="di Bernardo D."/>
            <person name="Down T."/>
            <person name="Engstrom P."/>
            <person name="Fagiolini M."/>
            <person name="Faulkner G."/>
            <person name="Fletcher C.F."/>
            <person name="Fukushima T."/>
            <person name="Furuno M."/>
            <person name="Futaki S."/>
            <person name="Gariboldi M."/>
            <person name="Georgii-Hemming P."/>
            <person name="Gingeras T.R."/>
            <person name="Gojobori T."/>
            <person name="Green R.E."/>
            <person name="Gustincich S."/>
            <person name="Harbers M."/>
            <person name="Hayashi Y."/>
            <person name="Hensch T.K."/>
            <person name="Hirokawa N."/>
            <person name="Hill D."/>
            <person name="Huminiecki L."/>
            <person name="Iacono M."/>
            <person name="Ikeo K."/>
            <person name="Iwama A."/>
            <person name="Ishikawa T."/>
            <person name="Jakt M."/>
            <person name="Kanapin A."/>
            <person name="Katoh M."/>
            <person name="Kawasawa Y."/>
            <person name="Kelso J."/>
            <person name="Kitamura H."/>
            <person name="Kitano H."/>
            <person name="Kollias G."/>
            <person name="Krishnan S.P."/>
            <person name="Kruger A."/>
            <person name="Kummerfeld S.K."/>
            <person name="Kurochkin I.V."/>
            <person name="Lareau L.F."/>
            <person name="Lazarevic D."/>
            <person name="Lipovich L."/>
            <person name="Liu J."/>
            <person name="Liuni S."/>
            <person name="McWilliam S."/>
            <person name="Madan Babu M."/>
            <person name="Madera M."/>
            <person name="Marchionni L."/>
            <person name="Matsuda H."/>
            <person name="Matsuzawa S."/>
            <person name="Miki H."/>
            <person name="Mignone F."/>
            <person name="Miyake S."/>
            <person name="Morris K."/>
            <person name="Mottagui-Tabar S."/>
            <person name="Mulder N."/>
            <person name="Nakano N."/>
            <person name="Nakauchi H."/>
            <person name="Ng P."/>
            <person name="Nilsson R."/>
            <person name="Nishiguchi S."/>
            <person name="Nishikawa S."/>
            <person name="Nori F."/>
            <person name="Ohara O."/>
            <person name="Okazaki Y."/>
            <person name="Orlando V."/>
            <person name="Pang K.C."/>
            <person name="Pavan W.J."/>
            <person name="Pavesi G."/>
            <person name="Pesole G."/>
            <person name="Petrovsky N."/>
            <person name="Piazza S."/>
            <person name="Reed J."/>
            <person name="Reid J.F."/>
            <person name="Ring B.Z."/>
            <person name="Ringwald M."/>
            <person name="Rost B."/>
            <person name="Ruan Y."/>
            <person name="Salzberg S.L."/>
            <person name="Sandelin A."/>
            <person name="Schneider C."/>
            <person name="Schoenbach C."/>
            <person name="Sekiguchi K."/>
            <person name="Semple C.A."/>
            <person name="Seno S."/>
            <person name="Sessa L."/>
            <person name="Sheng Y."/>
            <person name="Shibata Y."/>
            <person name="Shimada H."/>
            <person name="Shimada K."/>
            <person name="Silva D."/>
            <person name="Sinclair B."/>
            <person name="Sperling S."/>
            <person name="Stupka E."/>
            <person name="Sugiura K."/>
            <person name="Sultana R."/>
            <person name="Takenaka Y."/>
            <person name="Taki K."/>
            <person name="Tammoja K."/>
            <person name="Tan S.L."/>
            <person name="Tang S."/>
            <person name="Taylor M.S."/>
            <person name="Tegner J."/>
            <person name="Teichmann S.A."/>
            <person name="Ueda H.R."/>
            <person name="van Nimwegen E."/>
            <person name="Verardo R."/>
            <person name="Wei C.L."/>
            <person name="Yagi K."/>
            <person name="Yamanishi H."/>
            <person name="Zabarovsky E."/>
            <person name="Zhu S."/>
            <person name="Zimmer A."/>
            <person name="Hide W."/>
            <person name="Bult C."/>
            <person name="Grimmond S.M."/>
            <person name="Teasdale R.D."/>
            <person name="Liu E.T."/>
            <person name="Brusic V."/>
            <person name="Quackenbush J."/>
            <person name="Wahlestedt C."/>
            <person name="Mattick J.S."/>
            <person name="Hume D.A."/>
            <person name="Kai C."/>
            <person name="Sasaki D."/>
            <person name="Tomaru Y."/>
            <person name="Fukuda S."/>
            <person name="Kanamori-Katayama M."/>
            <person name="Suzuki M."/>
            <person name="Aoki J."/>
            <person name="Arakawa T."/>
            <person name="Iida J."/>
            <person name="Imamura K."/>
            <person name="Itoh M."/>
            <person name="Kato T."/>
            <person name="Kawaji H."/>
            <person name="Kawagashira N."/>
            <person name="Kawashima T."/>
            <person name="Kojima M."/>
            <person name="Kondo S."/>
            <person name="Konno H."/>
            <person name="Nakano K."/>
            <person name="Ninomiya N."/>
            <person name="Nishio T."/>
            <person name="Okada M."/>
            <person name="Plessy C."/>
            <person name="Shibata K."/>
            <person name="Shiraki T."/>
            <person name="Suzuki S."/>
            <person name="Tagami M."/>
            <person name="Waki K."/>
            <person name="Watahiki A."/>
            <person name="Okamura-Oho Y."/>
            <person name="Suzuki H."/>
            <person name="Kawai J."/>
            <person name="Hayashizaki Y."/>
        </authorList>
    </citation>
    <scope>NUCLEOTIDE SEQUENCE [LARGE SCALE MRNA]</scope>
    <source>
        <strain>C57BL/6J</strain>
        <tissue>Head</tissue>
    </source>
</reference>
<reference key="2">
    <citation type="journal article" date="2009" name="PLoS Biol.">
        <title>Lineage-specific biology revealed by a finished genome assembly of the mouse.</title>
        <authorList>
            <person name="Church D.M."/>
            <person name="Goodstadt L."/>
            <person name="Hillier L.W."/>
            <person name="Zody M.C."/>
            <person name="Goldstein S."/>
            <person name="She X."/>
            <person name="Bult C.J."/>
            <person name="Agarwala R."/>
            <person name="Cherry J.L."/>
            <person name="DiCuccio M."/>
            <person name="Hlavina W."/>
            <person name="Kapustin Y."/>
            <person name="Meric P."/>
            <person name="Maglott D."/>
            <person name="Birtle Z."/>
            <person name="Marques A.C."/>
            <person name="Graves T."/>
            <person name="Zhou S."/>
            <person name="Teague B."/>
            <person name="Potamousis K."/>
            <person name="Churas C."/>
            <person name="Place M."/>
            <person name="Herschleb J."/>
            <person name="Runnheim R."/>
            <person name="Forrest D."/>
            <person name="Amos-Landgraf J."/>
            <person name="Schwartz D.C."/>
            <person name="Cheng Z."/>
            <person name="Lindblad-Toh K."/>
            <person name="Eichler E.E."/>
            <person name="Ponting C.P."/>
        </authorList>
    </citation>
    <scope>NUCLEOTIDE SEQUENCE [LARGE SCALE GENOMIC DNA]</scope>
    <source>
        <strain>C57BL/6J</strain>
    </source>
</reference>
<reference key="3">
    <citation type="journal article" date="2004" name="Genome Res.">
        <title>The status, quality, and expansion of the NIH full-length cDNA project: the Mammalian Gene Collection (MGC).</title>
        <authorList>
            <consortium name="The MGC Project Team"/>
        </authorList>
    </citation>
    <scope>NUCLEOTIDE SEQUENCE [LARGE SCALE MRNA] OF 107-384</scope>
    <source>
        <tissue>Mammary tumor</tissue>
    </source>
</reference>
<reference key="4">
    <citation type="journal article" date="2010" name="Nat. Biotechnol.">
        <title>A mouse knockout library for secreted and transmembrane proteins.</title>
        <authorList>
            <person name="Tang T."/>
            <person name="Li L."/>
            <person name="Tang J."/>
            <person name="Li Y."/>
            <person name="Lin W.Y."/>
            <person name="Martin F."/>
            <person name="Grant D."/>
            <person name="Solloway M."/>
            <person name="Parker L."/>
            <person name="Ye W."/>
            <person name="Forrest W."/>
            <person name="Ghilardi N."/>
            <person name="Oravecz T."/>
            <person name="Platt K.A."/>
            <person name="Rice D.S."/>
            <person name="Hansen G.M."/>
            <person name="Abuin A."/>
            <person name="Eberhart D.E."/>
            <person name="Godowski P."/>
            <person name="Holt K.H."/>
            <person name="Peterson A."/>
            <person name="Zambrowicz B.P."/>
            <person name="de Sauvage F.J."/>
        </authorList>
    </citation>
    <scope>DISRUPTION PHENOTYPE</scope>
</reference>
<reference key="5">
    <citation type="journal article" date="2014" name="EMBO J.">
        <title>Shedding of glycan-modifying enzymes by signal peptide peptidase-like 3 (SPPL3) regulates cellular N-glycosylation.</title>
        <authorList>
            <person name="Voss M."/>
            <person name="Kunzel U."/>
            <person name="Higel F."/>
            <person name="Kuhn P.H."/>
            <person name="Colombo A."/>
            <person name="Fukumori A."/>
            <person name="Haug-Kroper M."/>
            <person name="Klier B."/>
            <person name="Grammer G."/>
            <person name="Seidl A."/>
            <person name="Schroder B."/>
            <person name="Obst R."/>
            <person name="Steiner H."/>
            <person name="Lichtenthaler S.F."/>
            <person name="Haass C."/>
            <person name="Fluhrer R."/>
        </authorList>
    </citation>
    <scope>FUNCTION</scope>
    <scope>DISRUPTION PHENOTYPE</scope>
</reference>
<reference key="6">
    <citation type="journal article" date="2015" name="Mol. Cell. Biol.">
        <title>A protease-independent function for SPPL3 in NFAT activation.</title>
        <authorList>
            <person name="Makowski S.L."/>
            <person name="Wang Z."/>
            <person name="Pomerantz J.L."/>
        </authorList>
    </citation>
    <scope>FUNCTION</scope>
    <scope>INTERACTION WITH STIM1</scope>
    <scope>MUTAGENESIS OF ASP-200 AND ASP-271</scope>
</reference>
<reference key="7">
    <citation type="journal article" date="2015" name="Mol. Cell. Proteomics">
        <title>Secretome analysis identifies novel signal peptide peptidase-like 3 (SPPL3) substrates and reveals a role of SPPL3 in multiple Golgi glycosylation pathways.</title>
        <authorList>
            <person name="Kuhn P.H."/>
            <person name="Voss M."/>
            <person name="Haug-Kroper M."/>
            <person name="Schroder B."/>
            <person name="Schepers U."/>
            <person name="Brase S."/>
            <person name="Haass C."/>
            <person name="Lichtenthaler S.F."/>
            <person name="Fluhrer R."/>
        </authorList>
    </citation>
    <scope>FUNCTION</scope>
</reference>
<protein>
    <recommendedName>
        <fullName evidence="3">Signal peptide peptidase-like 3</fullName>
        <shortName evidence="3">SPP-like 3</shortName>
        <ecNumber>3.4.23.-</ecNumber>
    </recommendedName>
    <alternativeName>
        <fullName evidence="3">Intramembrane protease 2</fullName>
        <shortName evidence="3">IMP-2</shortName>
    </alternativeName>
    <alternativeName>
        <fullName evidence="3">Presenilin-like protein 4</fullName>
    </alternativeName>
</protein>
<proteinExistence type="evidence at protein level"/>
<sequence length="384" mass="42261">MAEQTYSWAYSLVDSSQVSTFLISILLIVYGSFRSLNMDFENQDKEKDSNSSSGSFNGNSTNNSIQTIDSTQALFLPIGASVSLLVMFFFFDSVQVVFTICTAVLATIAFAFLLLPMCQYLTRPCSPQNKISFGCCGRFTAAELLSFSLSVMLVLIWVLTGHWLLMDALAMGLCVAMIAFVRLPSLKVSCLLLSGLLIYDVFWVFFSAYIFNSNVMVKVATQPADNPLDVLSRKLHLGPNVGRDVPRLSLPGKLVFPSSTGSHFSMLGIGDIVMPGLLLCFVLRYDNYKKQASGDSCGAPGPANISGRMQKVSYFHCTLIGYFVGLLTATVASRIHRAAQPALLYLVPFTLLPLLTMAYLKGDLRRMWSEPFHSKSSSSRFLEV</sequence>
<feature type="chain" id="PRO_0000073913" description="Signal peptide peptidase-like 3">
    <location>
        <begin position="1"/>
        <end position="384"/>
    </location>
</feature>
<feature type="topological domain" description="Lumenal" evidence="3">
    <location>
        <begin position="1"/>
        <end position="8"/>
    </location>
</feature>
<feature type="transmembrane region" description="Helical" evidence="4">
    <location>
        <begin position="9"/>
        <end position="29"/>
    </location>
</feature>
<feature type="topological domain" description="Cytoplasmic" evidence="3">
    <location>
        <begin position="30"/>
        <end position="73"/>
    </location>
</feature>
<feature type="transmembrane region" description="Helical" evidence="4">
    <location>
        <begin position="74"/>
        <end position="94"/>
    </location>
</feature>
<feature type="topological domain" description="Lumenal" evidence="4">
    <location>
        <position position="95"/>
    </location>
</feature>
<feature type="transmembrane region" description="Helical" evidence="4">
    <location>
        <begin position="96"/>
        <end position="116"/>
    </location>
</feature>
<feature type="topological domain" description="Cytoplasmic" evidence="4">
    <location>
        <begin position="117"/>
        <end position="138"/>
    </location>
</feature>
<feature type="transmembrane region" description="Helical" evidence="4">
    <location>
        <begin position="139"/>
        <end position="159"/>
    </location>
</feature>
<feature type="topological domain" description="Lumenal" evidence="4">
    <location>
        <begin position="160"/>
        <end position="164"/>
    </location>
</feature>
<feature type="transmembrane region" description="Helical" evidence="4">
    <location>
        <begin position="165"/>
        <end position="185"/>
    </location>
</feature>
<feature type="topological domain" description="Cytoplasmic" evidence="4">
    <location>
        <begin position="186"/>
        <end position="190"/>
    </location>
</feature>
<feature type="transmembrane region" description="Helical" evidence="4">
    <location>
        <begin position="191"/>
        <end position="211"/>
    </location>
</feature>
<feature type="topological domain" description="Lumenal" evidence="3">
    <location>
        <begin position="212"/>
        <end position="262"/>
    </location>
</feature>
<feature type="transmembrane region" description="Helical" evidence="4">
    <location>
        <begin position="263"/>
        <end position="283"/>
    </location>
</feature>
<feature type="topological domain" description="Cytoplasmic" evidence="4">
    <location>
        <begin position="284"/>
        <end position="311"/>
    </location>
</feature>
<feature type="transmembrane region" description="Helical" evidence="4">
    <location>
        <begin position="312"/>
        <end position="332"/>
    </location>
</feature>
<feature type="topological domain" description="Lumenal" evidence="4">
    <location>
        <begin position="333"/>
        <end position="339"/>
    </location>
</feature>
<feature type="transmembrane region" description="Helical" evidence="4">
    <location>
        <begin position="340"/>
        <end position="360"/>
    </location>
</feature>
<feature type="topological domain" description="Cytoplasmic" evidence="3">
    <location>
        <begin position="361"/>
        <end position="384"/>
    </location>
</feature>
<feature type="short sequence motif" description="PAL">
    <location>
        <begin position="341"/>
        <end position="343"/>
    </location>
</feature>
<feature type="active site" evidence="2">
    <location>
        <position position="200"/>
    </location>
</feature>
<feature type="active site" evidence="2">
    <location>
        <position position="271"/>
    </location>
</feature>
<feature type="mutagenesis site" description="Does not inhibit NFAT-induced transcription activation." evidence="7">
    <original>D</original>
    <variation>A</variation>
    <location>
        <position position="200"/>
    </location>
</feature>
<feature type="mutagenesis site" description="Does not inhibit NFAT-induced transcription activation." evidence="7">
    <original>D</original>
    <variation>A</variation>
    <location>
        <position position="271"/>
    </location>
</feature>
<feature type="sequence conflict" description="In Ref. 1; BAB29515." evidence="9" ref="1">
    <original>V</original>
    <variation>D</variation>
    <location>
        <position position="181"/>
    </location>
</feature>
<feature type="sequence conflict" description="In Ref. 1; BAB29515." evidence="9" ref="1">
    <original>R</original>
    <variation>K</variation>
    <location>
        <position position="233"/>
    </location>
</feature>
<gene>
    <name evidence="3 10" type="primary">Sppl3</name>
    <name evidence="3" type="synonym">Imp2</name>
    <name evidence="3" type="synonym">Psl4</name>
    <name type="synonym">Usmg3</name>
</gene>
<accession>Q9CUS9</accession>
<accession>E9QP88</accession>
<accession>Q8R597</accession>
<dbReference type="EC" id="3.4.23.-"/>
<dbReference type="EMBL" id="AK014709">
    <property type="protein sequence ID" value="BAB29515.1"/>
    <property type="status" value="ALT_INIT"/>
    <property type="molecule type" value="mRNA"/>
</dbReference>
<dbReference type="EMBL" id="AC117799">
    <property type="status" value="NOT_ANNOTATED_CDS"/>
    <property type="molecule type" value="Genomic_DNA"/>
</dbReference>
<dbReference type="EMBL" id="AC119205">
    <property type="status" value="NOT_ANNOTATED_CDS"/>
    <property type="molecule type" value="Genomic_DNA"/>
</dbReference>
<dbReference type="EMBL" id="BC023131">
    <property type="protein sequence ID" value="AAH23131.2"/>
    <property type="molecule type" value="mRNA"/>
</dbReference>
<dbReference type="CCDS" id="CCDS19578.1"/>
<dbReference type="RefSeq" id="NP_083288.2">
    <property type="nucleotide sequence ID" value="NM_029012.2"/>
</dbReference>
<dbReference type="BioGRID" id="216863">
    <property type="interactions" value="1"/>
</dbReference>
<dbReference type="FunCoup" id="Q9CUS9">
    <property type="interactions" value="4038"/>
</dbReference>
<dbReference type="STRING" id="10090.ENSMUSP00000031530"/>
<dbReference type="MEROPS" id="A22.005"/>
<dbReference type="PhosphoSitePlus" id="Q9CUS9"/>
<dbReference type="PaxDb" id="10090-ENSMUSP00000031530"/>
<dbReference type="ProteomicsDB" id="261625"/>
<dbReference type="Pumba" id="Q9CUS9"/>
<dbReference type="Antibodypedia" id="31508">
    <property type="antibodies" value="108 antibodies from 20 providers"/>
</dbReference>
<dbReference type="DNASU" id="74585"/>
<dbReference type="Ensembl" id="ENSMUST00000031530.9">
    <property type="protein sequence ID" value="ENSMUSP00000031530.6"/>
    <property type="gene ID" value="ENSMUSG00000029550.12"/>
</dbReference>
<dbReference type="GeneID" id="74585"/>
<dbReference type="KEGG" id="mmu:74585"/>
<dbReference type="UCSC" id="uc008zda.1">
    <property type="organism name" value="mouse"/>
</dbReference>
<dbReference type="AGR" id="MGI:1891433"/>
<dbReference type="CTD" id="121665"/>
<dbReference type="MGI" id="MGI:1891433">
    <property type="gene designation" value="Sppl3"/>
</dbReference>
<dbReference type="VEuPathDB" id="HostDB:ENSMUSG00000029550"/>
<dbReference type="eggNOG" id="KOG2443">
    <property type="taxonomic scope" value="Eukaryota"/>
</dbReference>
<dbReference type="GeneTree" id="ENSGT00940000158101"/>
<dbReference type="HOGENOM" id="CLU_061449_0_0_1"/>
<dbReference type="InParanoid" id="Q9CUS9"/>
<dbReference type="OMA" id="VDYQWAY"/>
<dbReference type="OrthoDB" id="29661at2759"/>
<dbReference type="PhylomeDB" id="Q9CUS9"/>
<dbReference type="TreeFam" id="TF323842"/>
<dbReference type="BRENDA" id="3.4.23.B24">
    <property type="organism ID" value="3474"/>
</dbReference>
<dbReference type="BioGRID-ORCS" id="74585">
    <property type="hits" value="4 hits in 80 CRISPR screens"/>
</dbReference>
<dbReference type="ChiTaRS" id="Sppl3">
    <property type="organism name" value="mouse"/>
</dbReference>
<dbReference type="PRO" id="PR:Q9CUS9"/>
<dbReference type="Proteomes" id="UP000000589">
    <property type="component" value="Chromosome 5"/>
</dbReference>
<dbReference type="RNAct" id="Q9CUS9">
    <property type="molecule type" value="protein"/>
</dbReference>
<dbReference type="Bgee" id="ENSMUSG00000029550">
    <property type="expression patterns" value="Expressed in floor plate of midbrain and 262 other cell types or tissues"/>
</dbReference>
<dbReference type="ExpressionAtlas" id="Q9CUS9">
    <property type="expression patterns" value="baseline and differential"/>
</dbReference>
<dbReference type="GO" id="GO:0098554">
    <property type="term" value="C:cytoplasmic side of endoplasmic reticulum membrane"/>
    <property type="evidence" value="ECO:0000250"/>
    <property type="project" value="UniProtKB"/>
</dbReference>
<dbReference type="GO" id="GO:0033116">
    <property type="term" value="C:endoplasmic reticulum-Golgi intermediate compartment membrane"/>
    <property type="evidence" value="ECO:0000314"/>
    <property type="project" value="UniProtKB"/>
</dbReference>
<dbReference type="GO" id="GO:0005794">
    <property type="term" value="C:Golgi apparatus"/>
    <property type="evidence" value="ECO:0007669"/>
    <property type="project" value="UniProtKB-SubCell"/>
</dbReference>
<dbReference type="GO" id="GO:0030660">
    <property type="term" value="C:Golgi-associated vesicle membrane"/>
    <property type="evidence" value="ECO:0000250"/>
    <property type="project" value="UniProtKB"/>
</dbReference>
<dbReference type="GO" id="GO:0098553">
    <property type="term" value="C:lumenal side of endoplasmic reticulum membrane"/>
    <property type="evidence" value="ECO:0000250"/>
    <property type="project" value="UniProtKB"/>
</dbReference>
<dbReference type="GO" id="GO:0016020">
    <property type="term" value="C:membrane"/>
    <property type="evidence" value="ECO:0000250"/>
    <property type="project" value="UniProtKB"/>
</dbReference>
<dbReference type="GO" id="GO:0005886">
    <property type="term" value="C:plasma membrane"/>
    <property type="evidence" value="ECO:0007669"/>
    <property type="project" value="Ensembl"/>
</dbReference>
<dbReference type="GO" id="GO:0005791">
    <property type="term" value="C:rough endoplasmic reticulum"/>
    <property type="evidence" value="ECO:0000250"/>
    <property type="project" value="UniProtKB"/>
</dbReference>
<dbReference type="GO" id="GO:0042500">
    <property type="term" value="F:aspartic endopeptidase activity, intramembrane cleaving"/>
    <property type="evidence" value="ECO:0000250"/>
    <property type="project" value="UniProtKB"/>
</dbReference>
<dbReference type="GO" id="GO:0042803">
    <property type="term" value="F:protein homodimerization activity"/>
    <property type="evidence" value="ECO:0000250"/>
    <property type="project" value="UniProtKB"/>
</dbReference>
<dbReference type="GO" id="GO:0033619">
    <property type="term" value="P:membrane protein proteolysis"/>
    <property type="evidence" value="ECO:0000250"/>
    <property type="project" value="UniProtKB"/>
</dbReference>
<dbReference type="GO" id="GO:0070886">
    <property type="term" value="P:positive regulation of calcineurin-NFAT signaling cascade"/>
    <property type="evidence" value="ECO:0000314"/>
    <property type="project" value="UniProtKB"/>
</dbReference>
<dbReference type="GO" id="GO:0007204">
    <property type="term" value="P:positive regulation of cytosolic calcium ion concentration"/>
    <property type="evidence" value="ECO:0000314"/>
    <property type="project" value="UniProtKB"/>
</dbReference>
<dbReference type="GO" id="GO:0050852">
    <property type="term" value="P:T cell receptor signaling pathway"/>
    <property type="evidence" value="ECO:0000314"/>
    <property type="project" value="UniProtKB"/>
</dbReference>
<dbReference type="InterPro" id="IPR007369">
    <property type="entry name" value="Peptidase_A22B_SPP"/>
</dbReference>
<dbReference type="InterPro" id="IPR006639">
    <property type="entry name" value="Preselin/SPP"/>
</dbReference>
<dbReference type="PANTHER" id="PTHR12174">
    <property type="entry name" value="SIGNAL PEPTIDE PEPTIDASE"/>
    <property type="match status" value="1"/>
</dbReference>
<dbReference type="PANTHER" id="PTHR12174:SF22">
    <property type="entry name" value="SIGNAL PEPTIDE PEPTIDASE-LIKE 3"/>
    <property type="match status" value="1"/>
</dbReference>
<dbReference type="Pfam" id="PF04258">
    <property type="entry name" value="Peptidase_A22B"/>
    <property type="match status" value="1"/>
</dbReference>
<dbReference type="SMART" id="SM00730">
    <property type="entry name" value="PSN"/>
    <property type="match status" value="1"/>
</dbReference>
<evidence type="ECO:0000250" key="1">
    <source>
        <dbReference type="UniProtKB" id="P49768"/>
    </source>
</evidence>
<evidence type="ECO:0000250" key="2">
    <source>
        <dbReference type="UniProtKB" id="P49810"/>
    </source>
</evidence>
<evidence type="ECO:0000250" key="3">
    <source>
        <dbReference type="UniProtKB" id="Q8TCT6"/>
    </source>
</evidence>
<evidence type="ECO:0000255" key="4"/>
<evidence type="ECO:0000269" key="5">
    <source>
    </source>
</evidence>
<evidence type="ECO:0000269" key="6">
    <source>
    </source>
</evidence>
<evidence type="ECO:0000269" key="7">
    <source>
    </source>
</evidence>
<evidence type="ECO:0000269" key="8">
    <source>
    </source>
</evidence>
<evidence type="ECO:0000305" key="9"/>
<evidence type="ECO:0000312" key="10">
    <source>
        <dbReference type="MGI" id="MGI:1891433"/>
    </source>
</evidence>
<name>SPPL3_MOUSE</name>
<keyword id="KW-0256">Endoplasmic reticulum</keyword>
<keyword id="KW-0333">Golgi apparatus</keyword>
<keyword id="KW-0378">Hydrolase</keyword>
<keyword id="KW-0472">Membrane</keyword>
<keyword id="KW-0645">Protease</keyword>
<keyword id="KW-1185">Reference proteome</keyword>
<keyword id="KW-0812">Transmembrane</keyword>
<keyword id="KW-1133">Transmembrane helix</keyword>
<organism>
    <name type="scientific">Mus musculus</name>
    <name type="common">Mouse</name>
    <dbReference type="NCBI Taxonomy" id="10090"/>
    <lineage>
        <taxon>Eukaryota</taxon>
        <taxon>Metazoa</taxon>
        <taxon>Chordata</taxon>
        <taxon>Craniata</taxon>
        <taxon>Vertebrata</taxon>
        <taxon>Euteleostomi</taxon>
        <taxon>Mammalia</taxon>
        <taxon>Eutheria</taxon>
        <taxon>Euarchontoglires</taxon>
        <taxon>Glires</taxon>
        <taxon>Rodentia</taxon>
        <taxon>Myomorpha</taxon>
        <taxon>Muroidea</taxon>
        <taxon>Muridae</taxon>
        <taxon>Murinae</taxon>
        <taxon>Mus</taxon>
        <taxon>Mus</taxon>
    </lineage>
</organism>